<organism>
    <name type="scientific">Leifsonia xyli subsp. xyli (strain CTCB07)</name>
    <dbReference type="NCBI Taxonomy" id="281090"/>
    <lineage>
        <taxon>Bacteria</taxon>
        <taxon>Bacillati</taxon>
        <taxon>Actinomycetota</taxon>
        <taxon>Actinomycetes</taxon>
        <taxon>Micrococcales</taxon>
        <taxon>Microbacteriaceae</taxon>
        <taxon>Leifsonia</taxon>
    </lineage>
</organism>
<sequence>MAKIIAFDEDARRGLERGLNILADTVKVTLGPGGCNVVLEKKWGAPTITNDGVSIAKEIELDDPYEKIGAELVKEVAKKTDDVAGDGTTTATVLAQALVKEGLRNVAAGADPISLKRGIEKAVEAVTAELVGNAKEVESKAQIAATASISAGDTTIGDIIAEAIDKVGKEGVVTVEESNTFGTELELTEGMRFDKGFLSQYFVTDQDRQEAVFEDAYILIANQKISSIKDLLPIVDKVIQANKQLLIIAEDVDGEALATLIVNKIRGIFKSVAVKAPGFGDRRKAMLQDIAILTGGQVISEEVGLKLENVTLDLLGKARKVVITKDETTIVEGAGDPDQIAGRVAQIRGEIDNSDSDYDREKLQERLAKLAGGVAVIKAGAATEVELKERKHRIEDAVRNAKAAVEEGIVAGGGVALIQAGKLAFEKLSLEGDEATGANIVKVAIEAPMKQIAINAGMEPGVVVARVRELPLGHGLNAATGEYVDMLIAGINDPVKVTRSALQNAASIAGLFLTTEAVVADKPEKAAPVAAEPGAGMDF</sequence>
<accession>Q6ADK2</accession>
<keyword id="KW-0067">ATP-binding</keyword>
<keyword id="KW-0143">Chaperone</keyword>
<keyword id="KW-0963">Cytoplasm</keyword>
<keyword id="KW-0413">Isomerase</keyword>
<keyword id="KW-0547">Nucleotide-binding</keyword>
<keyword id="KW-1185">Reference proteome</keyword>
<dbReference type="EC" id="5.6.1.7" evidence="1"/>
<dbReference type="EMBL" id="AE016822">
    <property type="protein sequence ID" value="AAT89544.1"/>
    <property type="molecule type" value="Genomic_DNA"/>
</dbReference>
<dbReference type="RefSeq" id="WP_011186532.1">
    <property type="nucleotide sequence ID" value="NC_006087.1"/>
</dbReference>
<dbReference type="SMR" id="Q6ADK2"/>
<dbReference type="STRING" id="281090.Lxx18010"/>
<dbReference type="KEGG" id="lxx:Lxx18010"/>
<dbReference type="eggNOG" id="COG0459">
    <property type="taxonomic scope" value="Bacteria"/>
</dbReference>
<dbReference type="HOGENOM" id="CLU_016503_3_0_11"/>
<dbReference type="Proteomes" id="UP000001306">
    <property type="component" value="Chromosome"/>
</dbReference>
<dbReference type="GO" id="GO:0005737">
    <property type="term" value="C:cytoplasm"/>
    <property type="evidence" value="ECO:0007669"/>
    <property type="project" value="UniProtKB-SubCell"/>
</dbReference>
<dbReference type="GO" id="GO:0005524">
    <property type="term" value="F:ATP binding"/>
    <property type="evidence" value="ECO:0007669"/>
    <property type="project" value="UniProtKB-UniRule"/>
</dbReference>
<dbReference type="GO" id="GO:0140662">
    <property type="term" value="F:ATP-dependent protein folding chaperone"/>
    <property type="evidence" value="ECO:0007669"/>
    <property type="project" value="InterPro"/>
</dbReference>
<dbReference type="GO" id="GO:0016853">
    <property type="term" value="F:isomerase activity"/>
    <property type="evidence" value="ECO:0007669"/>
    <property type="project" value="UniProtKB-KW"/>
</dbReference>
<dbReference type="GO" id="GO:0051082">
    <property type="term" value="F:unfolded protein binding"/>
    <property type="evidence" value="ECO:0007669"/>
    <property type="project" value="UniProtKB-UniRule"/>
</dbReference>
<dbReference type="GO" id="GO:0042026">
    <property type="term" value="P:protein refolding"/>
    <property type="evidence" value="ECO:0007669"/>
    <property type="project" value="UniProtKB-UniRule"/>
</dbReference>
<dbReference type="CDD" id="cd03344">
    <property type="entry name" value="GroEL"/>
    <property type="match status" value="1"/>
</dbReference>
<dbReference type="FunFam" id="3.50.7.10:FF:000001">
    <property type="entry name" value="60 kDa chaperonin"/>
    <property type="match status" value="1"/>
</dbReference>
<dbReference type="Gene3D" id="3.50.7.10">
    <property type="entry name" value="GroEL"/>
    <property type="match status" value="1"/>
</dbReference>
<dbReference type="Gene3D" id="1.10.560.10">
    <property type="entry name" value="GroEL-like equatorial domain"/>
    <property type="match status" value="1"/>
</dbReference>
<dbReference type="Gene3D" id="3.30.260.10">
    <property type="entry name" value="TCP-1-like chaperonin intermediate domain"/>
    <property type="match status" value="1"/>
</dbReference>
<dbReference type="HAMAP" id="MF_00600">
    <property type="entry name" value="CH60"/>
    <property type="match status" value="1"/>
</dbReference>
<dbReference type="InterPro" id="IPR018370">
    <property type="entry name" value="Chaperonin_Cpn60_CS"/>
</dbReference>
<dbReference type="InterPro" id="IPR001844">
    <property type="entry name" value="Cpn60/GroEL"/>
</dbReference>
<dbReference type="InterPro" id="IPR002423">
    <property type="entry name" value="Cpn60/GroEL/TCP-1"/>
</dbReference>
<dbReference type="InterPro" id="IPR027409">
    <property type="entry name" value="GroEL-like_apical_dom_sf"/>
</dbReference>
<dbReference type="InterPro" id="IPR027413">
    <property type="entry name" value="GROEL-like_equatorial_sf"/>
</dbReference>
<dbReference type="InterPro" id="IPR027410">
    <property type="entry name" value="TCP-1-like_intermed_sf"/>
</dbReference>
<dbReference type="NCBIfam" id="TIGR02348">
    <property type="entry name" value="GroEL"/>
    <property type="match status" value="1"/>
</dbReference>
<dbReference type="NCBIfam" id="NF000592">
    <property type="entry name" value="PRK00013.1"/>
    <property type="match status" value="1"/>
</dbReference>
<dbReference type="NCBIfam" id="NF009487">
    <property type="entry name" value="PRK12849.1"/>
    <property type="match status" value="1"/>
</dbReference>
<dbReference type="NCBIfam" id="NF009488">
    <property type="entry name" value="PRK12850.1"/>
    <property type="match status" value="1"/>
</dbReference>
<dbReference type="NCBIfam" id="NF009489">
    <property type="entry name" value="PRK12851.1"/>
    <property type="match status" value="1"/>
</dbReference>
<dbReference type="PANTHER" id="PTHR45633">
    <property type="entry name" value="60 KDA HEAT SHOCK PROTEIN, MITOCHONDRIAL"/>
    <property type="match status" value="1"/>
</dbReference>
<dbReference type="Pfam" id="PF00118">
    <property type="entry name" value="Cpn60_TCP1"/>
    <property type="match status" value="1"/>
</dbReference>
<dbReference type="PRINTS" id="PR00298">
    <property type="entry name" value="CHAPERONIN60"/>
</dbReference>
<dbReference type="SUPFAM" id="SSF52029">
    <property type="entry name" value="GroEL apical domain-like"/>
    <property type="match status" value="1"/>
</dbReference>
<dbReference type="SUPFAM" id="SSF48592">
    <property type="entry name" value="GroEL equatorial domain-like"/>
    <property type="match status" value="1"/>
</dbReference>
<dbReference type="SUPFAM" id="SSF54849">
    <property type="entry name" value="GroEL-intermediate domain like"/>
    <property type="match status" value="1"/>
</dbReference>
<dbReference type="PROSITE" id="PS00296">
    <property type="entry name" value="CHAPERONINS_CPN60"/>
    <property type="match status" value="1"/>
</dbReference>
<evidence type="ECO:0000255" key="1">
    <source>
        <dbReference type="HAMAP-Rule" id="MF_00600"/>
    </source>
</evidence>
<reference key="1">
    <citation type="journal article" date="2004" name="Mol. Plant Microbe Interact.">
        <title>The genome sequence of the Gram-positive sugarcane pathogen Leifsonia xyli subsp. xyli.</title>
        <authorList>
            <person name="Monteiro-Vitorello C.B."/>
            <person name="Camargo L.E.A."/>
            <person name="Van Sluys M.A."/>
            <person name="Kitajima J.P."/>
            <person name="Truffi D."/>
            <person name="do Amaral A.M."/>
            <person name="Harakava R."/>
            <person name="de Oliveira J.C.F."/>
            <person name="Wood D."/>
            <person name="de Oliveira M.C."/>
            <person name="Miyaki C.Y."/>
            <person name="Takita M.A."/>
            <person name="da Silva A.C.R."/>
            <person name="Furlan L.R."/>
            <person name="Carraro D.M."/>
            <person name="Camarotte G."/>
            <person name="Almeida N.F. Jr."/>
            <person name="Carrer H."/>
            <person name="Coutinho L.L."/>
            <person name="El-Dorry H.A."/>
            <person name="Ferro M.I.T."/>
            <person name="Gagliardi P.R."/>
            <person name="Giglioti E."/>
            <person name="Goldman M.H.S."/>
            <person name="Goldman G.H."/>
            <person name="Kimura E.T."/>
            <person name="Ferro E.S."/>
            <person name="Kuramae E.E."/>
            <person name="Lemos E.G.M."/>
            <person name="Lemos M.V.F."/>
            <person name="Mauro S.M.Z."/>
            <person name="Machado M.A."/>
            <person name="Marino C.L."/>
            <person name="Menck C.F."/>
            <person name="Nunes L.R."/>
            <person name="Oliveira R.C."/>
            <person name="Pereira G.G."/>
            <person name="Siqueira W."/>
            <person name="de Souza A.A."/>
            <person name="Tsai S.M."/>
            <person name="Zanca A.S."/>
            <person name="Simpson A.J.G."/>
            <person name="Brumbley S.M."/>
            <person name="Setubal J.C."/>
        </authorList>
    </citation>
    <scope>NUCLEOTIDE SEQUENCE [LARGE SCALE GENOMIC DNA]</scope>
    <source>
        <strain>CTCB07</strain>
    </source>
</reference>
<proteinExistence type="inferred from homology"/>
<feature type="chain" id="PRO_0000063409" description="Chaperonin GroEL">
    <location>
        <begin position="1"/>
        <end position="539"/>
    </location>
</feature>
<feature type="binding site" evidence="1">
    <location>
        <begin position="29"/>
        <end position="32"/>
    </location>
    <ligand>
        <name>ATP</name>
        <dbReference type="ChEBI" id="CHEBI:30616"/>
    </ligand>
</feature>
<feature type="binding site" evidence="1">
    <location>
        <begin position="86"/>
        <end position="90"/>
    </location>
    <ligand>
        <name>ATP</name>
        <dbReference type="ChEBI" id="CHEBI:30616"/>
    </ligand>
</feature>
<feature type="binding site" evidence="1">
    <location>
        <position position="413"/>
    </location>
    <ligand>
        <name>ATP</name>
        <dbReference type="ChEBI" id="CHEBI:30616"/>
    </ligand>
</feature>
<feature type="binding site" evidence="1">
    <location>
        <begin position="477"/>
        <end position="479"/>
    </location>
    <ligand>
        <name>ATP</name>
        <dbReference type="ChEBI" id="CHEBI:30616"/>
    </ligand>
</feature>
<feature type="binding site" evidence="1">
    <location>
        <position position="493"/>
    </location>
    <ligand>
        <name>ATP</name>
        <dbReference type="ChEBI" id="CHEBI:30616"/>
    </ligand>
</feature>
<gene>
    <name evidence="1" type="primary">groEL</name>
    <name evidence="1" type="synonym">groL</name>
    <name type="ordered locus">Lxx18010</name>
</gene>
<name>CH60_LEIXX</name>
<comment type="function">
    <text evidence="1">Together with its co-chaperonin GroES, plays an essential role in assisting protein folding. The GroEL-GroES system forms a nano-cage that allows encapsulation of the non-native substrate proteins and provides a physical environment optimized to promote and accelerate protein folding.</text>
</comment>
<comment type="catalytic activity">
    <reaction evidence="1">
        <text>ATP + H2O + a folded polypeptide = ADP + phosphate + an unfolded polypeptide.</text>
        <dbReference type="EC" id="5.6.1.7"/>
    </reaction>
</comment>
<comment type="subunit">
    <text evidence="1">Forms a cylinder of 14 subunits composed of two heptameric rings stacked back-to-back. Interacts with the co-chaperonin GroES.</text>
</comment>
<comment type="subcellular location">
    <subcellularLocation>
        <location evidence="1">Cytoplasm</location>
    </subcellularLocation>
</comment>
<comment type="similarity">
    <text evidence="1">Belongs to the chaperonin (HSP60) family.</text>
</comment>
<protein>
    <recommendedName>
        <fullName evidence="1">Chaperonin GroEL</fullName>
        <ecNumber evidence="1">5.6.1.7</ecNumber>
    </recommendedName>
    <alternativeName>
        <fullName evidence="1">60 kDa chaperonin</fullName>
    </alternativeName>
    <alternativeName>
        <fullName evidence="1">Chaperonin-60</fullName>
        <shortName evidence="1">Cpn60</shortName>
    </alternativeName>
</protein>